<proteinExistence type="predicted"/>
<gene>
    <name type="ordered locus">MJ1330</name>
</gene>
<sequence>MDAGMDLYIGSNEERDRVKEKLKEILLKQLSNPNVSTLLIAAILLDNEGRANNLPFNYNEDPNYVYVDEVIGLAIANEIAGTKAIFNFRFYDAKKPGIIGELDRKGFMFLDDAIAGLLAGCMSKVFE</sequence>
<name>Y1330_METJA</name>
<reference key="1">
    <citation type="journal article" date="1996" name="Science">
        <title>Complete genome sequence of the methanogenic archaeon, Methanococcus jannaschii.</title>
        <authorList>
            <person name="Bult C.J."/>
            <person name="White O."/>
            <person name="Olsen G.J."/>
            <person name="Zhou L."/>
            <person name="Fleischmann R.D."/>
            <person name="Sutton G.G."/>
            <person name="Blake J.A."/>
            <person name="FitzGerald L.M."/>
            <person name="Clayton R.A."/>
            <person name="Gocayne J.D."/>
            <person name="Kerlavage A.R."/>
            <person name="Dougherty B.A."/>
            <person name="Tomb J.-F."/>
            <person name="Adams M.D."/>
            <person name="Reich C.I."/>
            <person name="Overbeek R."/>
            <person name="Kirkness E.F."/>
            <person name="Weinstock K.G."/>
            <person name="Merrick J.M."/>
            <person name="Glodek A."/>
            <person name="Scott J.L."/>
            <person name="Geoghagen N.S.M."/>
            <person name="Weidman J.F."/>
            <person name="Fuhrmann J.L."/>
            <person name="Nguyen D."/>
            <person name="Utterback T.R."/>
            <person name="Kelley J.M."/>
            <person name="Peterson J.D."/>
            <person name="Sadow P.W."/>
            <person name="Hanna M.C."/>
            <person name="Cotton M.D."/>
            <person name="Roberts K.M."/>
            <person name="Hurst M.A."/>
            <person name="Kaine B.P."/>
            <person name="Borodovsky M."/>
            <person name="Klenk H.-P."/>
            <person name="Fraser C.M."/>
            <person name="Smith H.O."/>
            <person name="Woese C.R."/>
            <person name="Venter J.C."/>
        </authorList>
    </citation>
    <scope>NUCLEOTIDE SEQUENCE [LARGE SCALE GENOMIC DNA]</scope>
    <source>
        <strain>ATCC 43067 / DSM 2661 / JAL-1 / JCM 10045 / NBRC 100440</strain>
    </source>
</reference>
<accession>Q58726</accession>
<protein>
    <recommendedName>
        <fullName>Uncharacterized protein MJ1330</fullName>
    </recommendedName>
</protein>
<feature type="chain" id="PRO_0000107277" description="Uncharacterized protein MJ1330">
    <location>
        <begin position="1"/>
        <end position="127"/>
    </location>
</feature>
<organism>
    <name type="scientific">Methanocaldococcus jannaschii (strain ATCC 43067 / DSM 2661 / JAL-1 / JCM 10045 / NBRC 100440)</name>
    <name type="common">Methanococcus jannaschii</name>
    <dbReference type="NCBI Taxonomy" id="243232"/>
    <lineage>
        <taxon>Archaea</taxon>
        <taxon>Methanobacteriati</taxon>
        <taxon>Methanobacteriota</taxon>
        <taxon>Methanomada group</taxon>
        <taxon>Methanococci</taxon>
        <taxon>Methanococcales</taxon>
        <taxon>Methanocaldococcaceae</taxon>
        <taxon>Methanocaldococcus</taxon>
    </lineage>
</organism>
<dbReference type="EMBL" id="L77117">
    <property type="protein sequence ID" value="AAB99339.1"/>
    <property type="molecule type" value="Genomic_DNA"/>
</dbReference>
<dbReference type="PIR" id="A64466">
    <property type="entry name" value="A64466"/>
</dbReference>
<dbReference type="SMR" id="Q58726"/>
<dbReference type="STRING" id="243232.MJ_1330"/>
<dbReference type="PaxDb" id="243232-MJ_1330"/>
<dbReference type="EnsemblBacteria" id="AAB99339">
    <property type="protein sequence ID" value="AAB99339"/>
    <property type="gene ID" value="MJ_1330"/>
</dbReference>
<dbReference type="KEGG" id="mja:MJ_1330"/>
<dbReference type="eggNOG" id="arCOG01869">
    <property type="taxonomic scope" value="Archaea"/>
</dbReference>
<dbReference type="HOGENOM" id="CLU_120791_0_0_2"/>
<dbReference type="InParanoid" id="Q58726"/>
<dbReference type="PhylomeDB" id="Q58726"/>
<dbReference type="Proteomes" id="UP000000805">
    <property type="component" value="Chromosome"/>
</dbReference>
<dbReference type="GO" id="GO:0008962">
    <property type="term" value="F:phosphatidylglycerophosphatase activity"/>
    <property type="evidence" value="ECO:0007669"/>
    <property type="project" value="InterPro"/>
</dbReference>
<dbReference type="GO" id="GO:0006629">
    <property type="term" value="P:lipid metabolic process"/>
    <property type="evidence" value="ECO:0007669"/>
    <property type="project" value="InterPro"/>
</dbReference>
<dbReference type="CDD" id="cd06971">
    <property type="entry name" value="PgpA"/>
    <property type="match status" value="1"/>
</dbReference>
<dbReference type="Gene3D" id="1.10.3760.10">
    <property type="entry name" value="PgpA-like"/>
    <property type="match status" value="1"/>
</dbReference>
<dbReference type="InterPro" id="IPR036681">
    <property type="entry name" value="PgpA-like_sf"/>
</dbReference>
<dbReference type="InterPro" id="IPR007686">
    <property type="entry name" value="YutG/PgpA"/>
</dbReference>
<dbReference type="Pfam" id="PF04608">
    <property type="entry name" value="PgpA"/>
    <property type="match status" value="1"/>
</dbReference>
<dbReference type="SUPFAM" id="SSF101307">
    <property type="entry name" value="YutG-like"/>
    <property type="match status" value="1"/>
</dbReference>
<keyword id="KW-1185">Reference proteome</keyword>